<protein>
    <recommendedName>
        <fullName evidence="1">2-isopropylmalate synthase</fullName>
        <ecNumber evidence="1">2.3.3.13</ecNumber>
    </recommendedName>
    <alternativeName>
        <fullName evidence="1">Alpha-IPM synthase</fullName>
    </alternativeName>
    <alternativeName>
        <fullName evidence="1">Alpha-isopropylmalate synthase</fullName>
    </alternativeName>
</protein>
<organism>
    <name type="scientific">Ectopseudomonas mendocina (strain ymp)</name>
    <name type="common">Pseudomonas mendocina</name>
    <dbReference type="NCBI Taxonomy" id="399739"/>
    <lineage>
        <taxon>Bacteria</taxon>
        <taxon>Pseudomonadati</taxon>
        <taxon>Pseudomonadota</taxon>
        <taxon>Gammaproteobacteria</taxon>
        <taxon>Pseudomonadales</taxon>
        <taxon>Pseudomonadaceae</taxon>
        <taxon>Ectopseudomonas</taxon>
    </lineage>
</organism>
<dbReference type="EC" id="2.3.3.13" evidence="1"/>
<dbReference type="EMBL" id="CP000680">
    <property type="protein sequence ID" value="ABP86240.1"/>
    <property type="molecule type" value="Genomic_DNA"/>
</dbReference>
<dbReference type="SMR" id="A4XY24"/>
<dbReference type="STRING" id="399739.Pmen_3492"/>
<dbReference type="KEGG" id="pmy:Pmen_3492"/>
<dbReference type="PATRIC" id="fig|399739.8.peg.3538"/>
<dbReference type="eggNOG" id="COG0119">
    <property type="taxonomic scope" value="Bacteria"/>
</dbReference>
<dbReference type="HOGENOM" id="CLU_004588_3_1_6"/>
<dbReference type="OrthoDB" id="9803573at2"/>
<dbReference type="UniPathway" id="UPA00048">
    <property type="reaction ID" value="UER00070"/>
</dbReference>
<dbReference type="GO" id="GO:0005737">
    <property type="term" value="C:cytoplasm"/>
    <property type="evidence" value="ECO:0007669"/>
    <property type="project" value="UniProtKB-SubCell"/>
</dbReference>
<dbReference type="GO" id="GO:0003852">
    <property type="term" value="F:2-isopropylmalate synthase activity"/>
    <property type="evidence" value="ECO:0007669"/>
    <property type="project" value="UniProtKB-UniRule"/>
</dbReference>
<dbReference type="GO" id="GO:0003985">
    <property type="term" value="F:acetyl-CoA C-acetyltransferase activity"/>
    <property type="evidence" value="ECO:0007669"/>
    <property type="project" value="UniProtKB-UniRule"/>
</dbReference>
<dbReference type="GO" id="GO:0000287">
    <property type="term" value="F:magnesium ion binding"/>
    <property type="evidence" value="ECO:0007669"/>
    <property type="project" value="UniProtKB-UniRule"/>
</dbReference>
<dbReference type="GO" id="GO:0009098">
    <property type="term" value="P:L-leucine biosynthetic process"/>
    <property type="evidence" value="ECO:0007669"/>
    <property type="project" value="UniProtKB-UniRule"/>
</dbReference>
<dbReference type="CDD" id="cd07942">
    <property type="entry name" value="DRE_TIM_LeuA"/>
    <property type="match status" value="1"/>
</dbReference>
<dbReference type="FunFam" id="3.20.20.70:FF:000045">
    <property type="entry name" value="2-isopropylmalate synthase"/>
    <property type="match status" value="1"/>
</dbReference>
<dbReference type="Gene3D" id="3.30.160.270">
    <property type="match status" value="1"/>
</dbReference>
<dbReference type="Gene3D" id="3.20.20.70">
    <property type="entry name" value="Aldolase class I"/>
    <property type="match status" value="1"/>
</dbReference>
<dbReference type="HAMAP" id="MF_00572">
    <property type="entry name" value="LeuA_type2"/>
    <property type="match status" value="1"/>
</dbReference>
<dbReference type="InterPro" id="IPR013709">
    <property type="entry name" value="2-isopropylmalate_synth_dimer"/>
</dbReference>
<dbReference type="InterPro" id="IPR002034">
    <property type="entry name" value="AIPM/Hcit_synth_CS"/>
</dbReference>
<dbReference type="InterPro" id="IPR013785">
    <property type="entry name" value="Aldolase_TIM"/>
</dbReference>
<dbReference type="InterPro" id="IPR005668">
    <property type="entry name" value="IPM_Synthase"/>
</dbReference>
<dbReference type="InterPro" id="IPR054692">
    <property type="entry name" value="LeuA-like_post-cat"/>
</dbReference>
<dbReference type="InterPro" id="IPR036230">
    <property type="entry name" value="LeuA_allosteric_dom_sf"/>
</dbReference>
<dbReference type="InterPro" id="IPR039371">
    <property type="entry name" value="LeuA_N_DRE-TIM"/>
</dbReference>
<dbReference type="InterPro" id="IPR000891">
    <property type="entry name" value="PYR_CT"/>
</dbReference>
<dbReference type="NCBIfam" id="TIGR00970">
    <property type="entry name" value="leuA_yeast"/>
    <property type="match status" value="1"/>
</dbReference>
<dbReference type="NCBIfam" id="NF002991">
    <property type="entry name" value="PRK03739.1"/>
    <property type="match status" value="1"/>
</dbReference>
<dbReference type="PANTHER" id="PTHR46911">
    <property type="match status" value="1"/>
</dbReference>
<dbReference type="PANTHER" id="PTHR46911:SF1">
    <property type="entry name" value="2-ISOPROPYLMALATE SYNTHASE"/>
    <property type="match status" value="1"/>
</dbReference>
<dbReference type="Pfam" id="PF00682">
    <property type="entry name" value="HMGL-like"/>
    <property type="match status" value="1"/>
</dbReference>
<dbReference type="Pfam" id="PF22615">
    <property type="entry name" value="IPMS_D2"/>
    <property type="match status" value="1"/>
</dbReference>
<dbReference type="Pfam" id="PF08502">
    <property type="entry name" value="LeuA_dimer"/>
    <property type="match status" value="1"/>
</dbReference>
<dbReference type="SMART" id="SM00917">
    <property type="entry name" value="LeuA_dimer"/>
    <property type="match status" value="1"/>
</dbReference>
<dbReference type="SUPFAM" id="SSF110921">
    <property type="entry name" value="2-isopropylmalate synthase LeuA, allosteric (dimerisation) domain"/>
    <property type="match status" value="1"/>
</dbReference>
<dbReference type="SUPFAM" id="SSF51569">
    <property type="entry name" value="Aldolase"/>
    <property type="match status" value="1"/>
</dbReference>
<dbReference type="SUPFAM" id="SSF89000">
    <property type="entry name" value="post-HMGL domain-like"/>
    <property type="match status" value="1"/>
</dbReference>
<dbReference type="PROSITE" id="PS00815">
    <property type="entry name" value="AIPM_HOMOCIT_SYNTH_1"/>
    <property type="match status" value="1"/>
</dbReference>
<dbReference type="PROSITE" id="PS00816">
    <property type="entry name" value="AIPM_HOMOCIT_SYNTH_2"/>
    <property type="match status" value="1"/>
</dbReference>
<dbReference type="PROSITE" id="PS50991">
    <property type="entry name" value="PYR_CT"/>
    <property type="match status" value="1"/>
</dbReference>
<reference key="1">
    <citation type="submission" date="2007-04" db="EMBL/GenBank/DDBJ databases">
        <title>Complete sequence of Pseudomonas mendocina ymp.</title>
        <authorList>
            <consortium name="US DOE Joint Genome Institute"/>
            <person name="Copeland A."/>
            <person name="Lucas S."/>
            <person name="Lapidus A."/>
            <person name="Barry K."/>
            <person name="Glavina del Rio T."/>
            <person name="Dalin E."/>
            <person name="Tice H."/>
            <person name="Pitluck S."/>
            <person name="Kiss H."/>
            <person name="Brettin T."/>
            <person name="Detter J.C."/>
            <person name="Bruce D."/>
            <person name="Han C."/>
            <person name="Schmutz J."/>
            <person name="Larimer F."/>
            <person name="Land M."/>
            <person name="Hauser L."/>
            <person name="Kyrpides N."/>
            <person name="Mikhailova N."/>
            <person name="Hersman L."/>
            <person name="Dubois J."/>
            <person name="Maurice P."/>
            <person name="Richardson P."/>
        </authorList>
    </citation>
    <scope>NUCLEOTIDE SEQUENCE [LARGE SCALE GENOMIC DNA]</scope>
    <source>
        <strain>ymp</strain>
    </source>
</reference>
<name>LEU1_ECTM1</name>
<proteinExistence type="inferred from homology"/>
<sequence>MTMLKDPSQKYRPFTPIALPDRTWPDKVIDRAPIWLSTDLRDGNQSLIEPMDAEKKMRFFKCLVAVGLKEIEVGFPSASQTDFDFVRELIEGGHIPDDVTIQVLTQARDDLIERTFESLKGAKRAIVHYYNACAPSFRKIVFNQDKAGVKAIAVAAGKTIKRLAAAQPDTQWGFEYSPEVFSSTETDFAVEVCNAVIEVFQPTPANKLILNLPATVECATPNNYADQIEWFGRHVDRRDSVLISVHTHNDRGTGVAASELAVMAGADRVEGCLFGNGERTGNVCLVTLALNLYTQGVDPQLDFSDIDAVRKVVEDCNQIPVHPRHPYAGDLVHTAFSGSHQDAIRKGFAQQKDDAVWEVPYLPIDPADIGRDYEAVIRVNSQSGKGGITFLLEQEYGISLPRRMQIEFSQVVQRETDRLGLEMTAAQIYQLLESEYLQASAPYALKGHRLQEENGTSAVDVEVISAGESHHWRGIGKGPLEALVAGLPVAVEIMDYSEHAIGAGTNAKAAAYIELRVNGGRALHGIGIDENLTTASFRALFSALNRALSQAESRAA</sequence>
<evidence type="ECO:0000255" key="1">
    <source>
        <dbReference type="HAMAP-Rule" id="MF_00572"/>
    </source>
</evidence>
<comment type="function">
    <text evidence="1">Catalyzes the condensation of the acetyl group of acetyl-CoA with 3-methyl-2-oxobutanoate (2-ketoisovalerate) to form 3-carboxy-3-hydroxy-4-methylpentanoate (2-isopropylmalate).</text>
</comment>
<comment type="catalytic activity">
    <reaction evidence="1">
        <text>3-methyl-2-oxobutanoate + acetyl-CoA + H2O = (2S)-2-isopropylmalate + CoA + H(+)</text>
        <dbReference type="Rhea" id="RHEA:21524"/>
        <dbReference type="ChEBI" id="CHEBI:1178"/>
        <dbReference type="ChEBI" id="CHEBI:11851"/>
        <dbReference type="ChEBI" id="CHEBI:15377"/>
        <dbReference type="ChEBI" id="CHEBI:15378"/>
        <dbReference type="ChEBI" id="CHEBI:57287"/>
        <dbReference type="ChEBI" id="CHEBI:57288"/>
        <dbReference type="EC" id="2.3.3.13"/>
    </reaction>
</comment>
<comment type="cofactor">
    <cofactor evidence="1">
        <name>Mg(2+)</name>
        <dbReference type="ChEBI" id="CHEBI:18420"/>
    </cofactor>
</comment>
<comment type="pathway">
    <text evidence="1">Amino-acid biosynthesis; L-leucine biosynthesis; L-leucine from 3-methyl-2-oxobutanoate: step 1/4.</text>
</comment>
<comment type="subunit">
    <text evidence="1">Homodimer.</text>
</comment>
<comment type="subcellular location">
    <subcellularLocation>
        <location evidence="1">Cytoplasm</location>
    </subcellularLocation>
</comment>
<comment type="similarity">
    <text evidence="1">Belongs to the alpha-IPM synthase/homocitrate synthase family. LeuA type 2 subfamily.</text>
</comment>
<accession>A4XY24</accession>
<keyword id="KW-0028">Amino-acid biosynthesis</keyword>
<keyword id="KW-0100">Branched-chain amino acid biosynthesis</keyword>
<keyword id="KW-0963">Cytoplasm</keyword>
<keyword id="KW-0432">Leucine biosynthesis</keyword>
<keyword id="KW-0460">Magnesium</keyword>
<keyword id="KW-0479">Metal-binding</keyword>
<keyword id="KW-0808">Transferase</keyword>
<gene>
    <name evidence="1" type="primary">leuA</name>
    <name type="ordered locus">Pmen_3492</name>
</gene>
<feature type="chain" id="PRO_1000025035" description="2-isopropylmalate synthase">
    <location>
        <begin position="1"/>
        <end position="556"/>
    </location>
</feature>
<feature type="domain" description="Pyruvate carboxyltransferase" evidence="1">
    <location>
        <begin position="33"/>
        <end position="307"/>
    </location>
</feature>
<feature type="region of interest" description="Regulatory domain" evidence="1">
    <location>
        <begin position="439"/>
        <end position="556"/>
    </location>
</feature>
<feature type="binding site" evidence="1">
    <location>
        <position position="42"/>
    </location>
    <ligand>
        <name>Mg(2+)</name>
        <dbReference type="ChEBI" id="CHEBI:18420"/>
    </ligand>
</feature>
<feature type="binding site" evidence="1">
    <location>
        <position position="246"/>
    </location>
    <ligand>
        <name>Mg(2+)</name>
        <dbReference type="ChEBI" id="CHEBI:18420"/>
    </ligand>
</feature>
<feature type="binding site" evidence="1">
    <location>
        <position position="248"/>
    </location>
    <ligand>
        <name>Mg(2+)</name>
        <dbReference type="ChEBI" id="CHEBI:18420"/>
    </ligand>
</feature>
<feature type="binding site" evidence="1">
    <location>
        <position position="282"/>
    </location>
    <ligand>
        <name>Mg(2+)</name>
        <dbReference type="ChEBI" id="CHEBI:18420"/>
    </ligand>
</feature>